<sequence>MWFLILFLALFLGGIDAAPPVQSRIIGGFNCEKNSQPWHVAVYRFARYQCGGVLLDANWVLTAAHCYNDKYQVWLGKNNRFEDEPSAQHQLISKAIPHPGFNMSLLNKDHTPHPEDDYSNDLMLVRLKKPAEITDVVKPIDLPTEEPTVGSRCLASGWGSTTPTEEFEYSHDLQCVYLELLSNEVCAKAHTEKVTDTMLCAGEMDGGKDTCVGDSGGPLICDGVLQGITSWGPTPCALPNVPGIYTKLIEYRSWIKDVMANNP</sequence>
<dbReference type="EC" id="3.4.21.35"/>
<dbReference type="EMBL" id="X17352">
    <property type="protein sequence ID" value="CAA35232.1"/>
    <property type="molecule type" value="mRNA"/>
</dbReference>
<dbReference type="PIR" id="I83227">
    <property type="entry name" value="S15686"/>
</dbReference>
<dbReference type="SMR" id="P32824"/>
<dbReference type="MEROPS" id="S01.290"/>
<dbReference type="BRENDA" id="3.4.21.35">
    <property type="organism ID" value="5009"/>
</dbReference>
<dbReference type="GO" id="GO:0030141">
    <property type="term" value="C:secretory granule"/>
    <property type="evidence" value="ECO:0007669"/>
    <property type="project" value="TreeGrafter"/>
</dbReference>
<dbReference type="GO" id="GO:0004252">
    <property type="term" value="F:serine-type endopeptidase activity"/>
    <property type="evidence" value="ECO:0007669"/>
    <property type="project" value="UniProtKB-EC"/>
</dbReference>
<dbReference type="GO" id="GO:0003073">
    <property type="term" value="P:regulation of systemic arterial blood pressure"/>
    <property type="evidence" value="ECO:0007669"/>
    <property type="project" value="TreeGrafter"/>
</dbReference>
<dbReference type="GO" id="GO:0031638">
    <property type="term" value="P:zymogen activation"/>
    <property type="evidence" value="ECO:0007669"/>
    <property type="project" value="TreeGrafter"/>
</dbReference>
<dbReference type="CDD" id="cd00190">
    <property type="entry name" value="Tryp_SPc"/>
    <property type="match status" value="1"/>
</dbReference>
<dbReference type="FunFam" id="2.40.10.10:FF:000032">
    <property type="entry name" value="Kallikrein 1-related peptidase C9"/>
    <property type="match status" value="1"/>
</dbReference>
<dbReference type="FunFam" id="2.40.10.10:FF:000042">
    <property type="entry name" value="Kallikrein 1-related peptidase C9"/>
    <property type="match status" value="1"/>
</dbReference>
<dbReference type="Gene3D" id="2.40.10.10">
    <property type="entry name" value="Trypsin-like serine proteases"/>
    <property type="match status" value="2"/>
</dbReference>
<dbReference type="InterPro" id="IPR009003">
    <property type="entry name" value="Peptidase_S1_PA"/>
</dbReference>
<dbReference type="InterPro" id="IPR043504">
    <property type="entry name" value="Peptidase_S1_PA_chymotrypsin"/>
</dbReference>
<dbReference type="InterPro" id="IPR001314">
    <property type="entry name" value="Peptidase_S1A"/>
</dbReference>
<dbReference type="InterPro" id="IPR001254">
    <property type="entry name" value="Trypsin_dom"/>
</dbReference>
<dbReference type="InterPro" id="IPR018114">
    <property type="entry name" value="TRYPSIN_HIS"/>
</dbReference>
<dbReference type="InterPro" id="IPR033116">
    <property type="entry name" value="TRYPSIN_SER"/>
</dbReference>
<dbReference type="PANTHER" id="PTHR24271:SF47">
    <property type="entry name" value="KALLIKREIN-1"/>
    <property type="match status" value="1"/>
</dbReference>
<dbReference type="PANTHER" id="PTHR24271">
    <property type="entry name" value="KALLIKREIN-RELATED"/>
    <property type="match status" value="1"/>
</dbReference>
<dbReference type="Pfam" id="PF00089">
    <property type="entry name" value="Trypsin"/>
    <property type="match status" value="1"/>
</dbReference>
<dbReference type="PRINTS" id="PR00722">
    <property type="entry name" value="CHYMOTRYPSIN"/>
</dbReference>
<dbReference type="SMART" id="SM00020">
    <property type="entry name" value="Tryp_SPc"/>
    <property type="match status" value="1"/>
</dbReference>
<dbReference type="SUPFAM" id="SSF50494">
    <property type="entry name" value="Trypsin-like serine proteases"/>
    <property type="match status" value="1"/>
</dbReference>
<dbReference type="PROSITE" id="PS50240">
    <property type="entry name" value="TRYPSIN_DOM"/>
    <property type="match status" value="1"/>
</dbReference>
<dbReference type="PROSITE" id="PS00134">
    <property type="entry name" value="TRYPSIN_HIS"/>
    <property type="match status" value="1"/>
</dbReference>
<dbReference type="PROSITE" id="PS00135">
    <property type="entry name" value="TRYPSIN_SER"/>
    <property type="match status" value="1"/>
</dbReference>
<evidence type="ECO:0000255" key="1">
    <source>
        <dbReference type="PROSITE-ProRule" id="PRU00274"/>
    </source>
</evidence>
<evidence type="ECO:0000305" key="2"/>
<reference key="1">
    <citation type="journal article" date="1994" name="DNA Cell Biol.">
        <title>Characterization of kallikrein cDNAs from the African rodent Mastomys.</title>
        <authorList>
            <person name="Fahnestock M."/>
        </authorList>
    </citation>
    <scope>NUCLEOTIDE SEQUENCE [MRNA]</scope>
    <source>
        <tissue>Salivary gland</tissue>
    </source>
</reference>
<protein>
    <recommendedName>
        <fullName>Renal glandular kallikrein</fullName>
        <ecNumber>3.4.21.35</ecNumber>
    </recommendedName>
    <alternativeName>
        <fullName>Tissue kallikrein</fullName>
    </alternativeName>
</protein>
<proteinExistence type="evidence at transcript level"/>
<comment type="function">
    <text>Glandular kallikreins cleave Met-Lys and Arg-Ser bonds in kininogen to release Lys-bradykinin.</text>
</comment>
<comment type="catalytic activity">
    <reaction>
        <text>Preferential cleavage of Arg-|-Xaa bonds in small molecule substrates. Highly selective action to release kallidin (lysyl-bradykinin) from kininogen involves hydrolysis of Met-|-Xaa or Leu-|-Xaa.</text>
        <dbReference type="EC" id="3.4.21.35"/>
    </reaction>
</comment>
<comment type="similarity">
    <text evidence="1">Belongs to the peptidase S1 family. Kallikrein subfamily.</text>
</comment>
<accession>P32824</accession>
<feature type="signal peptide" evidence="2">
    <location>
        <begin position="1"/>
        <end position="18"/>
    </location>
</feature>
<feature type="propeptide" id="PRO_0000027997" description="Activation peptide" evidence="2">
    <location>
        <begin position="19"/>
        <end position="24"/>
    </location>
</feature>
<feature type="chain" id="PRO_0000027998" description="Renal glandular kallikrein">
    <location>
        <begin position="25"/>
        <end position="263"/>
    </location>
</feature>
<feature type="domain" description="Peptidase S1" evidence="1">
    <location>
        <begin position="25"/>
        <end position="260"/>
    </location>
</feature>
<feature type="active site" description="Charge relay system">
    <location>
        <position position="65"/>
    </location>
</feature>
<feature type="active site" description="Charge relay system">
    <location>
        <position position="121"/>
    </location>
</feature>
<feature type="active site" description="Charge relay system">
    <location>
        <position position="215"/>
    </location>
</feature>
<feature type="glycosylation site" description="N-linked (GlcNAc...) asparagine" evidence="2">
    <location>
        <position position="102"/>
    </location>
</feature>
<feature type="disulfide bond" evidence="1">
    <location>
        <begin position="31"/>
        <end position="175"/>
    </location>
</feature>
<feature type="disulfide bond" evidence="1">
    <location>
        <begin position="50"/>
        <end position="66"/>
    </location>
</feature>
<feature type="disulfide bond" evidence="1">
    <location>
        <begin position="153"/>
        <end position="221"/>
    </location>
</feature>
<feature type="disulfide bond" evidence="1">
    <location>
        <begin position="186"/>
        <end position="200"/>
    </location>
</feature>
<feature type="disulfide bond" evidence="1">
    <location>
        <begin position="211"/>
        <end position="236"/>
    </location>
</feature>
<organism>
    <name type="scientific">Mastomys natalensis</name>
    <name type="common">African soft-furred rat</name>
    <name type="synonym">Praomys natalensis</name>
    <dbReference type="NCBI Taxonomy" id="10112"/>
    <lineage>
        <taxon>Eukaryota</taxon>
        <taxon>Metazoa</taxon>
        <taxon>Chordata</taxon>
        <taxon>Craniata</taxon>
        <taxon>Vertebrata</taxon>
        <taxon>Euteleostomi</taxon>
        <taxon>Mammalia</taxon>
        <taxon>Eutheria</taxon>
        <taxon>Euarchontoglires</taxon>
        <taxon>Glires</taxon>
        <taxon>Rodentia</taxon>
        <taxon>Myomorpha</taxon>
        <taxon>Muroidea</taxon>
        <taxon>Muridae</taxon>
        <taxon>Murinae</taxon>
        <taxon>Mastomys</taxon>
    </lineage>
</organism>
<name>KLKR_MASNA</name>
<keyword id="KW-1015">Disulfide bond</keyword>
<keyword id="KW-0325">Glycoprotein</keyword>
<keyword id="KW-0378">Hydrolase</keyword>
<keyword id="KW-0645">Protease</keyword>
<keyword id="KW-0720">Serine protease</keyword>
<keyword id="KW-0732">Signal</keyword>
<keyword id="KW-0865">Zymogen</keyword>